<dbReference type="EC" id="2.7.1.33" evidence="1"/>
<dbReference type="EMBL" id="CP000863">
    <property type="protein sequence ID" value="ACC56064.1"/>
    <property type="molecule type" value="Genomic_DNA"/>
</dbReference>
<dbReference type="RefSeq" id="WP_000839415.1">
    <property type="nucleotide sequence ID" value="NZ_CP031380.1"/>
</dbReference>
<dbReference type="SMR" id="B2HUI9"/>
<dbReference type="KEGG" id="abc:ACICU_00752"/>
<dbReference type="HOGENOM" id="CLU_066627_0_1_6"/>
<dbReference type="UniPathway" id="UPA00241">
    <property type="reaction ID" value="UER00352"/>
</dbReference>
<dbReference type="Proteomes" id="UP000008839">
    <property type="component" value="Chromosome"/>
</dbReference>
<dbReference type="GO" id="GO:0005737">
    <property type="term" value="C:cytoplasm"/>
    <property type="evidence" value="ECO:0007669"/>
    <property type="project" value="UniProtKB-SubCell"/>
</dbReference>
<dbReference type="GO" id="GO:0005524">
    <property type="term" value="F:ATP binding"/>
    <property type="evidence" value="ECO:0007669"/>
    <property type="project" value="UniProtKB-UniRule"/>
</dbReference>
<dbReference type="GO" id="GO:0004594">
    <property type="term" value="F:pantothenate kinase activity"/>
    <property type="evidence" value="ECO:0007669"/>
    <property type="project" value="UniProtKB-UniRule"/>
</dbReference>
<dbReference type="GO" id="GO:0015937">
    <property type="term" value="P:coenzyme A biosynthetic process"/>
    <property type="evidence" value="ECO:0007669"/>
    <property type="project" value="UniProtKB-UniRule"/>
</dbReference>
<dbReference type="CDD" id="cd24015">
    <property type="entry name" value="ASKHA_NBD_PanK-III"/>
    <property type="match status" value="1"/>
</dbReference>
<dbReference type="Gene3D" id="3.30.420.40">
    <property type="match status" value="2"/>
</dbReference>
<dbReference type="HAMAP" id="MF_01274">
    <property type="entry name" value="Pantothen_kinase_3"/>
    <property type="match status" value="1"/>
</dbReference>
<dbReference type="InterPro" id="IPR043129">
    <property type="entry name" value="ATPase_NBD"/>
</dbReference>
<dbReference type="InterPro" id="IPR004619">
    <property type="entry name" value="Type_III_PanK"/>
</dbReference>
<dbReference type="NCBIfam" id="TIGR00671">
    <property type="entry name" value="baf"/>
    <property type="match status" value="1"/>
</dbReference>
<dbReference type="NCBIfam" id="NF009856">
    <property type="entry name" value="PRK13322.1-1"/>
    <property type="match status" value="1"/>
</dbReference>
<dbReference type="PANTHER" id="PTHR34265">
    <property type="entry name" value="TYPE III PANTOTHENATE KINASE"/>
    <property type="match status" value="1"/>
</dbReference>
<dbReference type="PANTHER" id="PTHR34265:SF1">
    <property type="entry name" value="TYPE III PANTOTHENATE KINASE"/>
    <property type="match status" value="1"/>
</dbReference>
<dbReference type="Pfam" id="PF03309">
    <property type="entry name" value="Pan_kinase"/>
    <property type="match status" value="1"/>
</dbReference>
<dbReference type="SUPFAM" id="SSF53067">
    <property type="entry name" value="Actin-like ATPase domain"/>
    <property type="match status" value="2"/>
</dbReference>
<gene>
    <name evidence="1" type="primary">coaX</name>
    <name type="ordered locus">ACICU_00752</name>
</gene>
<name>COAX_ACIBC</name>
<keyword id="KW-0067">ATP-binding</keyword>
<keyword id="KW-0173">Coenzyme A biosynthesis</keyword>
<keyword id="KW-0963">Cytoplasm</keyword>
<keyword id="KW-0418">Kinase</keyword>
<keyword id="KW-0547">Nucleotide-binding</keyword>
<keyword id="KW-0630">Potassium</keyword>
<keyword id="KW-0808">Transferase</keyword>
<reference key="1">
    <citation type="journal article" date="2008" name="Antimicrob. Agents Chemother.">
        <title>Whole-genome pyrosequencing of an epidemic multidrug-resistant Acinetobacter baumannii strain belonging to the European clone II group.</title>
        <authorList>
            <person name="Iacono M."/>
            <person name="Villa L."/>
            <person name="Fortini D."/>
            <person name="Bordoni R."/>
            <person name="Imperi F."/>
            <person name="Bonnal R.J."/>
            <person name="Sicheritz-Ponten T."/>
            <person name="De Bellis G."/>
            <person name="Visca P."/>
            <person name="Cassone A."/>
            <person name="Carattoli A."/>
        </authorList>
    </citation>
    <scope>NUCLEOTIDE SEQUENCE [LARGE SCALE GENOMIC DNA]</scope>
    <source>
        <strain>ACICU</strain>
    </source>
</reference>
<organism>
    <name type="scientific">Acinetobacter baumannii (strain ACICU)</name>
    <dbReference type="NCBI Taxonomy" id="405416"/>
    <lineage>
        <taxon>Bacteria</taxon>
        <taxon>Pseudomonadati</taxon>
        <taxon>Pseudomonadota</taxon>
        <taxon>Gammaproteobacteria</taxon>
        <taxon>Moraxellales</taxon>
        <taxon>Moraxellaceae</taxon>
        <taxon>Acinetobacter</taxon>
        <taxon>Acinetobacter calcoaceticus/baumannii complex</taxon>
    </lineage>
</organism>
<comment type="function">
    <text evidence="1">Catalyzes the phosphorylation of pantothenate (Pan), the first step in CoA biosynthesis.</text>
</comment>
<comment type="catalytic activity">
    <reaction evidence="1">
        <text>(R)-pantothenate + ATP = (R)-4'-phosphopantothenate + ADP + H(+)</text>
        <dbReference type="Rhea" id="RHEA:16373"/>
        <dbReference type="ChEBI" id="CHEBI:10986"/>
        <dbReference type="ChEBI" id="CHEBI:15378"/>
        <dbReference type="ChEBI" id="CHEBI:29032"/>
        <dbReference type="ChEBI" id="CHEBI:30616"/>
        <dbReference type="ChEBI" id="CHEBI:456216"/>
        <dbReference type="EC" id="2.7.1.33"/>
    </reaction>
</comment>
<comment type="cofactor">
    <cofactor evidence="1">
        <name>NH4(+)</name>
        <dbReference type="ChEBI" id="CHEBI:28938"/>
    </cofactor>
    <cofactor evidence="1">
        <name>K(+)</name>
        <dbReference type="ChEBI" id="CHEBI:29103"/>
    </cofactor>
    <text evidence="1">A monovalent cation. Ammonium or potassium.</text>
</comment>
<comment type="pathway">
    <text evidence="1">Cofactor biosynthesis; coenzyme A biosynthesis; CoA from (R)-pantothenate: step 1/5.</text>
</comment>
<comment type="subunit">
    <text evidence="1">Homodimer.</text>
</comment>
<comment type="subcellular location">
    <subcellularLocation>
        <location evidence="1">Cytoplasm</location>
    </subcellularLocation>
</comment>
<comment type="similarity">
    <text evidence="1">Belongs to the type III pantothenate kinase family.</text>
</comment>
<evidence type="ECO:0000255" key="1">
    <source>
        <dbReference type="HAMAP-Rule" id="MF_01274"/>
    </source>
</evidence>
<proteinExistence type="inferred from homology"/>
<sequence length="244" mass="27406">MKSLWLDIGNTRLKYWITENQQIIEHAAELHLQSPADLLLGLIQHFKHQGLHRIGISSVLDTENNQRIQQILKWLEIPVVFAKVHAEYAGLQCGYEVPSQLGIDRWLQVLAVAEEKENYCIIGCGTALTIDLTKGKQHLGGYILPNLYLQRDALIQNTKGIKIPDSAFDNLNPGNNTVDAVHHGILLGLISTIESIMQQSPKKLLLTGGDAKLFAKFLQKYDPVVETDLLLKGLQQYIAHYPKD</sequence>
<feature type="chain" id="PRO_1000140211" description="Type III pantothenate kinase">
    <location>
        <begin position="1"/>
        <end position="244"/>
    </location>
</feature>
<feature type="active site" description="Proton acceptor" evidence="1">
    <location>
        <position position="104"/>
    </location>
</feature>
<feature type="binding site" evidence="1">
    <location>
        <begin position="7"/>
        <end position="14"/>
    </location>
    <ligand>
        <name>ATP</name>
        <dbReference type="ChEBI" id="CHEBI:30616"/>
    </ligand>
</feature>
<feature type="binding site" evidence="1">
    <location>
        <position position="95"/>
    </location>
    <ligand>
        <name>substrate</name>
    </ligand>
</feature>
<feature type="binding site" evidence="1">
    <location>
        <begin position="102"/>
        <end position="105"/>
    </location>
    <ligand>
        <name>substrate</name>
    </ligand>
</feature>
<feature type="binding site" evidence="1">
    <location>
        <position position="126"/>
    </location>
    <ligand>
        <name>ATP</name>
        <dbReference type="ChEBI" id="CHEBI:30616"/>
    </ligand>
</feature>
<feature type="binding site" evidence="1">
    <location>
        <position position="177"/>
    </location>
    <ligand>
        <name>substrate</name>
    </ligand>
</feature>
<accession>B2HUI9</accession>
<protein>
    <recommendedName>
        <fullName evidence="1">Type III pantothenate kinase</fullName>
        <ecNumber evidence="1">2.7.1.33</ecNumber>
    </recommendedName>
    <alternativeName>
        <fullName evidence="1">PanK-III</fullName>
    </alternativeName>
    <alternativeName>
        <fullName evidence="1">Pantothenic acid kinase</fullName>
    </alternativeName>
</protein>